<feature type="chain" id="PRO_0000357112" description="Methylthioribulose-1-phosphate dehydratase">
    <location>
        <begin position="1"/>
        <end position="217"/>
    </location>
</feature>
<feature type="binding site" evidence="1">
    <location>
        <position position="106"/>
    </location>
    <ligand>
        <name>Zn(2+)</name>
        <dbReference type="ChEBI" id="CHEBI:29105"/>
    </ligand>
</feature>
<feature type="binding site" evidence="1">
    <location>
        <position position="108"/>
    </location>
    <ligand>
        <name>Zn(2+)</name>
        <dbReference type="ChEBI" id="CHEBI:29105"/>
    </ligand>
</feature>
<sequence>MNATTAPLPYSAARLHELAQLLIGNIRELAQAGWTPATSSNFSHRLDEQHAAITVSGRDKGRLVEEDIMVVDFDGQPVGRPLRPSAETLLHTQLYRRFPEIGCVLHTHSPVQTIASRLYAGSGVIRLEGYELLKAFEGNTTHETAVDVPVFANTQDMQVLAAQVEALLDKQSMWGYLIEGHGLYAWGRNMAEARRHLEAFEFLLHCELELLKLRSPR</sequence>
<protein>
    <recommendedName>
        <fullName evidence="1">Methylthioribulose-1-phosphate dehydratase</fullName>
        <shortName evidence="1">MTRu-1-P dehydratase</shortName>
        <ecNumber evidence="1">4.2.1.109</ecNumber>
    </recommendedName>
</protein>
<organism>
    <name type="scientific">Xanthomonas campestris pv. campestris (strain 8004)</name>
    <dbReference type="NCBI Taxonomy" id="314565"/>
    <lineage>
        <taxon>Bacteria</taxon>
        <taxon>Pseudomonadati</taxon>
        <taxon>Pseudomonadota</taxon>
        <taxon>Gammaproteobacteria</taxon>
        <taxon>Lysobacterales</taxon>
        <taxon>Lysobacteraceae</taxon>
        <taxon>Xanthomonas</taxon>
    </lineage>
</organism>
<dbReference type="EC" id="4.2.1.109" evidence="1"/>
<dbReference type="EMBL" id="CP000050">
    <property type="protein sequence ID" value="AAY49422.1"/>
    <property type="molecule type" value="Genomic_DNA"/>
</dbReference>
<dbReference type="RefSeq" id="WP_011036990.1">
    <property type="nucleotide sequence ID" value="NZ_CP155948.1"/>
</dbReference>
<dbReference type="SMR" id="Q4UU51"/>
<dbReference type="KEGG" id="xcb:XC_2369"/>
<dbReference type="HOGENOM" id="CLU_006033_4_1_6"/>
<dbReference type="UniPathway" id="UPA00904">
    <property type="reaction ID" value="UER00875"/>
</dbReference>
<dbReference type="Proteomes" id="UP000000420">
    <property type="component" value="Chromosome"/>
</dbReference>
<dbReference type="GO" id="GO:0005737">
    <property type="term" value="C:cytoplasm"/>
    <property type="evidence" value="ECO:0007669"/>
    <property type="project" value="InterPro"/>
</dbReference>
<dbReference type="GO" id="GO:0046570">
    <property type="term" value="F:methylthioribulose 1-phosphate dehydratase activity"/>
    <property type="evidence" value="ECO:0007669"/>
    <property type="project" value="UniProtKB-UniRule"/>
</dbReference>
<dbReference type="GO" id="GO:0008270">
    <property type="term" value="F:zinc ion binding"/>
    <property type="evidence" value="ECO:0007669"/>
    <property type="project" value="UniProtKB-UniRule"/>
</dbReference>
<dbReference type="GO" id="GO:0019509">
    <property type="term" value="P:L-methionine salvage from methylthioadenosine"/>
    <property type="evidence" value="ECO:0007669"/>
    <property type="project" value="UniProtKB-UniRule"/>
</dbReference>
<dbReference type="GO" id="GO:0005996">
    <property type="term" value="P:monosaccharide metabolic process"/>
    <property type="evidence" value="ECO:0007669"/>
    <property type="project" value="UniProtKB-ARBA"/>
</dbReference>
<dbReference type="FunFam" id="3.40.225.10:FF:000007">
    <property type="entry name" value="Methylthioribulose-1-phosphate dehydratase"/>
    <property type="match status" value="1"/>
</dbReference>
<dbReference type="Gene3D" id="3.40.225.10">
    <property type="entry name" value="Class II aldolase/adducin N-terminal domain"/>
    <property type="match status" value="1"/>
</dbReference>
<dbReference type="HAMAP" id="MF_01677">
    <property type="entry name" value="Salvage_MtnB"/>
    <property type="match status" value="1"/>
</dbReference>
<dbReference type="InterPro" id="IPR001303">
    <property type="entry name" value="Aldolase_II/adducin_N"/>
</dbReference>
<dbReference type="InterPro" id="IPR036409">
    <property type="entry name" value="Aldolase_II/adducin_N_sf"/>
</dbReference>
<dbReference type="InterPro" id="IPR017714">
    <property type="entry name" value="MethylthioRu-1-P_deHdtase_MtnB"/>
</dbReference>
<dbReference type="NCBIfam" id="NF006672">
    <property type="entry name" value="PRK09220.1"/>
    <property type="match status" value="1"/>
</dbReference>
<dbReference type="NCBIfam" id="TIGR03328">
    <property type="entry name" value="salvage_mtnB"/>
    <property type="match status" value="1"/>
</dbReference>
<dbReference type="PANTHER" id="PTHR10640">
    <property type="entry name" value="METHYLTHIORIBULOSE-1-PHOSPHATE DEHYDRATASE"/>
    <property type="match status" value="1"/>
</dbReference>
<dbReference type="PANTHER" id="PTHR10640:SF7">
    <property type="entry name" value="METHYLTHIORIBULOSE-1-PHOSPHATE DEHYDRATASE"/>
    <property type="match status" value="1"/>
</dbReference>
<dbReference type="Pfam" id="PF00596">
    <property type="entry name" value="Aldolase_II"/>
    <property type="match status" value="1"/>
</dbReference>
<dbReference type="SMART" id="SM01007">
    <property type="entry name" value="Aldolase_II"/>
    <property type="match status" value="1"/>
</dbReference>
<dbReference type="SUPFAM" id="SSF53639">
    <property type="entry name" value="AraD/HMP-PK domain-like"/>
    <property type="match status" value="1"/>
</dbReference>
<reference key="1">
    <citation type="journal article" date="2005" name="Genome Res.">
        <title>Comparative and functional genomic analyses of the pathogenicity of phytopathogen Xanthomonas campestris pv. campestris.</title>
        <authorList>
            <person name="Qian W."/>
            <person name="Jia Y."/>
            <person name="Ren S.-X."/>
            <person name="He Y.-Q."/>
            <person name="Feng J.-X."/>
            <person name="Lu L.-F."/>
            <person name="Sun Q."/>
            <person name="Ying G."/>
            <person name="Tang D.-J."/>
            <person name="Tang H."/>
            <person name="Wu W."/>
            <person name="Hao P."/>
            <person name="Wang L."/>
            <person name="Jiang B.-L."/>
            <person name="Zeng S."/>
            <person name="Gu W.-Y."/>
            <person name="Lu G."/>
            <person name="Rong L."/>
            <person name="Tian Y."/>
            <person name="Yao Z."/>
            <person name="Fu G."/>
            <person name="Chen B."/>
            <person name="Fang R."/>
            <person name="Qiang B."/>
            <person name="Chen Z."/>
            <person name="Zhao G.-P."/>
            <person name="Tang J.-L."/>
            <person name="He C."/>
        </authorList>
    </citation>
    <scope>NUCLEOTIDE SEQUENCE [LARGE SCALE GENOMIC DNA]</scope>
    <source>
        <strain>8004</strain>
    </source>
</reference>
<accession>Q4UU51</accession>
<name>MTNB_XANC8</name>
<gene>
    <name evidence="1" type="primary">mtnB</name>
    <name type="ordered locus">XC_2369</name>
</gene>
<keyword id="KW-0028">Amino-acid biosynthesis</keyword>
<keyword id="KW-0456">Lyase</keyword>
<keyword id="KW-0479">Metal-binding</keyword>
<keyword id="KW-0486">Methionine biosynthesis</keyword>
<keyword id="KW-0862">Zinc</keyword>
<evidence type="ECO:0000255" key="1">
    <source>
        <dbReference type="HAMAP-Rule" id="MF_01677"/>
    </source>
</evidence>
<comment type="function">
    <text evidence="1">Catalyzes the dehydration of methylthioribulose-1-phosphate (MTRu-1-P) into 2,3-diketo-5-methylthiopentyl-1-phosphate (DK-MTP-1-P).</text>
</comment>
<comment type="catalytic activity">
    <reaction evidence="1">
        <text>5-(methylsulfanyl)-D-ribulose 1-phosphate = 5-methylsulfanyl-2,3-dioxopentyl phosphate + H2O</text>
        <dbReference type="Rhea" id="RHEA:15549"/>
        <dbReference type="ChEBI" id="CHEBI:15377"/>
        <dbReference type="ChEBI" id="CHEBI:58548"/>
        <dbReference type="ChEBI" id="CHEBI:58828"/>
        <dbReference type="EC" id="4.2.1.109"/>
    </reaction>
</comment>
<comment type="cofactor">
    <cofactor evidence="1">
        <name>Zn(2+)</name>
        <dbReference type="ChEBI" id="CHEBI:29105"/>
    </cofactor>
    <text evidence="1">Binds 1 zinc ion per subunit.</text>
</comment>
<comment type="pathway">
    <text evidence="1">Amino-acid biosynthesis; L-methionine biosynthesis via salvage pathway; L-methionine from S-methyl-5-thio-alpha-D-ribose 1-phosphate: step 2/6.</text>
</comment>
<comment type="similarity">
    <text evidence="1">Belongs to the aldolase class II family. MtnB subfamily.</text>
</comment>
<proteinExistence type="inferred from homology"/>